<accession>Q8G5L8</accession>
<protein>
    <recommendedName>
        <fullName evidence="1">Dephospho-CoA kinase</fullName>
        <ecNumber evidence="1">2.7.1.24</ecNumber>
    </recommendedName>
    <alternativeName>
        <fullName evidence="1">Dephosphocoenzyme A kinase</fullName>
    </alternativeName>
</protein>
<feature type="chain" id="PRO_0000172911" description="Dephospho-CoA kinase">
    <location>
        <begin position="1"/>
        <end position="205"/>
    </location>
</feature>
<feature type="domain" description="DPCK" evidence="1">
    <location>
        <begin position="6"/>
        <end position="205"/>
    </location>
</feature>
<feature type="binding site" evidence="1">
    <location>
        <begin position="14"/>
        <end position="19"/>
    </location>
    <ligand>
        <name>ATP</name>
        <dbReference type="ChEBI" id="CHEBI:30616"/>
    </ligand>
</feature>
<reference key="1">
    <citation type="journal article" date="2002" name="Proc. Natl. Acad. Sci. U.S.A.">
        <title>The genome sequence of Bifidobacterium longum reflects its adaptation to the human gastrointestinal tract.</title>
        <authorList>
            <person name="Schell M.A."/>
            <person name="Karmirantzou M."/>
            <person name="Snel B."/>
            <person name="Vilanova D."/>
            <person name="Berger B."/>
            <person name="Pessi G."/>
            <person name="Zwahlen M.-C."/>
            <person name="Desiere F."/>
            <person name="Bork P."/>
            <person name="Delley M."/>
            <person name="Pridmore R.D."/>
            <person name="Arigoni F."/>
        </authorList>
    </citation>
    <scope>NUCLEOTIDE SEQUENCE [LARGE SCALE GENOMIC DNA]</scope>
    <source>
        <strain>NCC 2705</strain>
    </source>
</reference>
<keyword id="KW-0067">ATP-binding</keyword>
<keyword id="KW-0173">Coenzyme A biosynthesis</keyword>
<keyword id="KW-0963">Cytoplasm</keyword>
<keyword id="KW-0418">Kinase</keyword>
<keyword id="KW-0547">Nucleotide-binding</keyword>
<keyword id="KW-1185">Reference proteome</keyword>
<keyword id="KW-0808">Transferase</keyword>
<evidence type="ECO:0000255" key="1">
    <source>
        <dbReference type="HAMAP-Rule" id="MF_00376"/>
    </source>
</evidence>
<sequence>MGTMMRIGLTGGIAAGKSTVAARLKQLGALHIDYDALAHQIVEPGGVALPQIVAEFGPDALLADGTMNRPWIADHVFGANAAPGARERLDAIEHPLIYAEAARLEHEHPEAAIIIHDIPLLAEVIDDIPFAFDHIVTVEAPVCMRLDRMVEERGMSLEQAEARIRHQSSEEERRAIADIVIDSTHPLPEMLAQVGEIYAGWCAGR</sequence>
<organism>
    <name type="scientific">Bifidobacterium longum (strain NCC 2705)</name>
    <dbReference type="NCBI Taxonomy" id="206672"/>
    <lineage>
        <taxon>Bacteria</taxon>
        <taxon>Bacillati</taxon>
        <taxon>Actinomycetota</taxon>
        <taxon>Actinomycetes</taxon>
        <taxon>Bifidobacteriales</taxon>
        <taxon>Bifidobacteriaceae</taxon>
        <taxon>Bifidobacterium</taxon>
    </lineage>
</organism>
<gene>
    <name evidence="1" type="primary">coaE</name>
    <name type="ordered locus">BL0991</name>
</gene>
<comment type="function">
    <text evidence="1">Catalyzes the phosphorylation of the 3'-hydroxyl group of dephosphocoenzyme A to form coenzyme A.</text>
</comment>
<comment type="catalytic activity">
    <reaction evidence="1">
        <text>3'-dephospho-CoA + ATP = ADP + CoA + H(+)</text>
        <dbReference type="Rhea" id="RHEA:18245"/>
        <dbReference type="ChEBI" id="CHEBI:15378"/>
        <dbReference type="ChEBI" id="CHEBI:30616"/>
        <dbReference type="ChEBI" id="CHEBI:57287"/>
        <dbReference type="ChEBI" id="CHEBI:57328"/>
        <dbReference type="ChEBI" id="CHEBI:456216"/>
        <dbReference type="EC" id="2.7.1.24"/>
    </reaction>
</comment>
<comment type="pathway">
    <text evidence="1">Cofactor biosynthesis; coenzyme A biosynthesis; CoA from (R)-pantothenate: step 5/5.</text>
</comment>
<comment type="subcellular location">
    <subcellularLocation>
        <location evidence="1">Cytoplasm</location>
    </subcellularLocation>
</comment>
<comment type="similarity">
    <text evidence="1">Belongs to the CoaE family.</text>
</comment>
<name>COAE_BIFLO</name>
<proteinExistence type="inferred from homology"/>
<dbReference type="EC" id="2.7.1.24" evidence="1"/>
<dbReference type="EMBL" id="AE014295">
    <property type="protein sequence ID" value="AAN24799.1"/>
    <property type="molecule type" value="Genomic_DNA"/>
</dbReference>
<dbReference type="RefSeq" id="NP_696163.1">
    <property type="nucleotide sequence ID" value="NC_004307.2"/>
</dbReference>
<dbReference type="RefSeq" id="WP_007055464.1">
    <property type="nucleotide sequence ID" value="NC_004307.2"/>
</dbReference>
<dbReference type="SMR" id="Q8G5L8"/>
<dbReference type="STRING" id="206672.BL0991"/>
<dbReference type="EnsemblBacteria" id="AAN24799">
    <property type="protein sequence ID" value="AAN24799"/>
    <property type="gene ID" value="BL0991"/>
</dbReference>
<dbReference type="KEGG" id="blo:BL0991"/>
<dbReference type="PATRIC" id="fig|206672.9.peg.693"/>
<dbReference type="HOGENOM" id="CLU_057180_1_1_11"/>
<dbReference type="OrthoDB" id="9812943at2"/>
<dbReference type="PhylomeDB" id="Q8G5L8"/>
<dbReference type="UniPathway" id="UPA00241">
    <property type="reaction ID" value="UER00356"/>
</dbReference>
<dbReference type="Proteomes" id="UP000000439">
    <property type="component" value="Chromosome"/>
</dbReference>
<dbReference type="GO" id="GO:0005737">
    <property type="term" value="C:cytoplasm"/>
    <property type="evidence" value="ECO:0007669"/>
    <property type="project" value="UniProtKB-SubCell"/>
</dbReference>
<dbReference type="GO" id="GO:0005524">
    <property type="term" value="F:ATP binding"/>
    <property type="evidence" value="ECO:0007669"/>
    <property type="project" value="UniProtKB-UniRule"/>
</dbReference>
<dbReference type="GO" id="GO:0004140">
    <property type="term" value="F:dephospho-CoA kinase activity"/>
    <property type="evidence" value="ECO:0007669"/>
    <property type="project" value="UniProtKB-UniRule"/>
</dbReference>
<dbReference type="GO" id="GO:0015937">
    <property type="term" value="P:coenzyme A biosynthetic process"/>
    <property type="evidence" value="ECO:0007669"/>
    <property type="project" value="UniProtKB-UniRule"/>
</dbReference>
<dbReference type="CDD" id="cd02022">
    <property type="entry name" value="DPCK"/>
    <property type="match status" value="1"/>
</dbReference>
<dbReference type="Gene3D" id="3.40.50.300">
    <property type="entry name" value="P-loop containing nucleotide triphosphate hydrolases"/>
    <property type="match status" value="1"/>
</dbReference>
<dbReference type="HAMAP" id="MF_00376">
    <property type="entry name" value="Dephospho_CoA_kinase"/>
    <property type="match status" value="1"/>
</dbReference>
<dbReference type="InterPro" id="IPR001977">
    <property type="entry name" value="Depp_CoAkinase"/>
</dbReference>
<dbReference type="InterPro" id="IPR027417">
    <property type="entry name" value="P-loop_NTPase"/>
</dbReference>
<dbReference type="NCBIfam" id="TIGR00152">
    <property type="entry name" value="dephospho-CoA kinase"/>
    <property type="match status" value="1"/>
</dbReference>
<dbReference type="PANTHER" id="PTHR10695:SF46">
    <property type="entry name" value="BIFUNCTIONAL COENZYME A SYNTHASE-RELATED"/>
    <property type="match status" value="1"/>
</dbReference>
<dbReference type="PANTHER" id="PTHR10695">
    <property type="entry name" value="DEPHOSPHO-COA KINASE-RELATED"/>
    <property type="match status" value="1"/>
</dbReference>
<dbReference type="Pfam" id="PF01121">
    <property type="entry name" value="CoaE"/>
    <property type="match status" value="1"/>
</dbReference>
<dbReference type="SUPFAM" id="SSF52540">
    <property type="entry name" value="P-loop containing nucleoside triphosphate hydrolases"/>
    <property type="match status" value="1"/>
</dbReference>
<dbReference type="PROSITE" id="PS51219">
    <property type="entry name" value="DPCK"/>
    <property type="match status" value="1"/>
</dbReference>